<proteinExistence type="evidence at protein level"/>
<comment type="function">
    <text evidence="1 4">Bifunctional enzyme that catalyzes the fourth and fifth sequential steps of CoA biosynthetic pathway. The fourth reaction is catalyzed by the phosphopantetheine adenylyltransferase, coded by the coaD domain; the fifth reaction is catalyzed by the dephospho-CoA kinase, coded by the coaE domain. May act as a point of CoA biosynthesis regulation.</text>
</comment>
<comment type="catalytic activity">
    <reaction evidence="4">
        <text>(R)-4'-phosphopantetheine + ATP + H(+) = 3'-dephospho-CoA + diphosphate</text>
        <dbReference type="Rhea" id="RHEA:19801"/>
        <dbReference type="ChEBI" id="CHEBI:15378"/>
        <dbReference type="ChEBI" id="CHEBI:30616"/>
        <dbReference type="ChEBI" id="CHEBI:33019"/>
        <dbReference type="ChEBI" id="CHEBI:57328"/>
        <dbReference type="ChEBI" id="CHEBI:61723"/>
        <dbReference type="EC" id="2.7.7.3"/>
    </reaction>
    <physiologicalReaction direction="left-to-right" evidence="6">
        <dbReference type="Rhea" id="RHEA:19802"/>
    </physiologicalReaction>
</comment>
<comment type="catalytic activity">
    <reaction evidence="4">
        <text>3'-dephospho-CoA + ATP = ADP + CoA + H(+)</text>
        <dbReference type="Rhea" id="RHEA:18245"/>
        <dbReference type="ChEBI" id="CHEBI:15378"/>
        <dbReference type="ChEBI" id="CHEBI:30616"/>
        <dbReference type="ChEBI" id="CHEBI:57287"/>
        <dbReference type="ChEBI" id="CHEBI:57328"/>
        <dbReference type="ChEBI" id="CHEBI:456216"/>
        <dbReference type="EC" id="2.7.1.24"/>
    </reaction>
    <physiologicalReaction direction="left-to-right" evidence="6">
        <dbReference type="Rhea" id="RHEA:18246"/>
    </physiologicalReaction>
</comment>
<comment type="biophysicochemical properties">
    <kinetics>
        <KM evidence="3">11.1 uM for dephospho-CoA (in the PPAT reaction)</KM>
        <KM evidence="3">190 uM for 4'-phosphopantetheine</KM>
        <KM evidence="3">4.1 uM for dephospho-CoA (in the DPCK reaction)</KM>
        <KM evidence="3">330 uM for ATP (in the DPCK reaction)</KM>
        <Vmax evidence="3">8.13 umol/min/mg enzyme with dephospho-CoA as substrate (in the PPAT reaction)</Vmax>
        <Vmax evidence="3">4.37 umol/min/mg enzyme with dephospho-CoA as substrate (in the DPCK reaction)</Vmax>
    </kinetics>
</comment>
<comment type="pathway">
    <text>Cofactor biosynthesis; coenzyme A biosynthesis; CoA from (R)-pantothenate: step 4/5.</text>
</comment>
<comment type="pathway">
    <text evidence="1">Cofactor biosynthesis; coenzyme A biosynthesis; CoA from (R)-pantothenate: step 5/5.</text>
</comment>
<comment type="subunit">
    <text evidence="3">Monomer.</text>
</comment>
<comment type="subcellular location">
    <subcellularLocation>
        <location evidence="1">Cytoplasm</location>
    </subcellularLocation>
    <subcellularLocation>
        <location evidence="1">Mitochondrion matrix</location>
    </subcellularLocation>
    <text evidence="1">The protein is mainly present in the mitochondrial matrix, probably anchored to the inner mitochondrial membrane, but this protein is also present in cell lysate.</text>
</comment>
<comment type="PTM">
    <text evidence="3">The N-terminus is blocked.</text>
</comment>
<comment type="similarity">
    <text evidence="5">In the central section; belongs to the eukaryotic CoaD family.</text>
</comment>
<dbReference type="EC" id="2.7.7.3" evidence="4"/>
<dbReference type="EC" id="2.7.1.24" evidence="4"/>
<dbReference type="EMBL" id="AY094603">
    <property type="protein sequence ID" value="AAM19997.1"/>
    <property type="molecule type" value="mRNA"/>
</dbReference>
<dbReference type="RefSeq" id="NP_998954.1">
    <property type="nucleotide sequence ID" value="NM_213789.1"/>
</dbReference>
<dbReference type="FunCoup" id="Q8MIR4">
    <property type="interactions" value="1979"/>
</dbReference>
<dbReference type="STRING" id="9823.ENSSSCP00000060476"/>
<dbReference type="PaxDb" id="9823-ENSSSCP00000018433"/>
<dbReference type="PeptideAtlas" id="Q8MIR4"/>
<dbReference type="Ensembl" id="ENSSSCT00000088943.2">
    <property type="protein sequence ID" value="ENSSSCP00000060476.2"/>
    <property type="gene ID" value="ENSSSCG00000017398.5"/>
</dbReference>
<dbReference type="Ensembl" id="ENSSSCT00015090089.1">
    <property type="protein sequence ID" value="ENSSSCP00015036832.1"/>
    <property type="gene ID" value="ENSSSCG00015067057.1"/>
</dbReference>
<dbReference type="Ensembl" id="ENSSSCT00025084032.1">
    <property type="protein sequence ID" value="ENSSSCP00025036562.1"/>
    <property type="gene ID" value="ENSSSCG00025061029.1"/>
</dbReference>
<dbReference type="Ensembl" id="ENSSSCT00035026271.1">
    <property type="protein sequence ID" value="ENSSSCP00035009997.1"/>
    <property type="gene ID" value="ENSSSCG00035020192.1"/>
</dbReference>
<dbReference type="Ensembl" id="ENSSSCT00050088636.1">
    <property type="protein sequence ID" value="ENSSSCP00050038019.1"/>
    <property type="gene ID" value="ENSSSCG00050065066.1"/>
</dbReference>
<dbReference type="Ensembl" id="ENSSSCT00055055032.1">
    <property type="protein sequence ID" value="ENSSSCP00055043908.1"/>
    <property type="gene ID" value="ENSSSCG00055027753.1"/>
</dbReference>
<dbReference type="Ensembl" id="ENSSSCT00065005586.1">
    <property type="protein sequence ID" value="ENSSSCP00065002482.1"/>
    <property type="gene ID" value="ENSSSCG00065004053.1"/>
</dbReference>
<dbReference type="Ensembl" id="ENSSSCT00115021766">
    <property type="protein sequence ID" value="ENSSSCP00115020610"/>
    <property type="gene ID" value="ENSSSCG00115012603"/>
</dbReference>
<dbReference type="GeneID" id="396688"/>
<dbReference type="KEGG" id="ssc:396688"/>
<dbReference type="CTD" id="80347"/>
<dbReference type="VGNC" id="VGNC:97935">
    <property type="gene designation" value="COASY"/>
</dbReference>
<dbReference type="eggNOG" id="KOG3220">
    <property type="taxonomic scope" value="Eukaryota"/>
</dbReference>
<dbReference type="eggNOG" id="KOG3351">
    <property type="taxonomic scope" value="Eukaryota"/>
</dbReference>
<dbReference type="GeneTree" id="ENSGT00550000075078"/>
<dbReference type="HOGENOM" id="CLU_027827_1_0_1"/>
<dbReference type="InParanoid" id="Q8MIR4"/>
<dbReference type="OMA" id="TQCLQSY"/>
<dbReference type="OrthoDB" id="330671at2759"/>
<dbReference type="TreeFam" id="TF105783"/>
<dbReference type="BRENDA" id="2.7.1.24">
    <property type="organism ID" value="6170"/>
</dbReference>
<dbReference type="BRENDA" id="2.7.7.3">
    <property type="organism ID" value="6170"/>
</dbReference>
<dbReference type="Reactome" id="R-SSC-196783">
    <property type="pathway name" value="Coenzyme A biosynthesis"/>
</dbReference>
<dbReference type="SABIO-RK" id="Q8MIR4"/>
<dbReference type="UniPathway" id="UPA00241">
    <property type="reaction ID" value="UER00355"/>
</dbReference>
<dbReference type="UniPathway" id="UPA00241">
    <property type="reaction ID" value="UER00356"/>
</dbReference>
<dbReference type="Proteomes" id="UP000008227">
    <property type="component" value="Chromosome 12"/>
</dbReference>
<dbReference type="Proteomes" id="UP000314985">
    <property type="component" value="Unplaced"/>
</dbReference>
<dbReference type="Proteomes" id="UP000694570">
    <property type="component" value="Unplaced"/>
</dbReference>
<dbReference type="Proteomes" id="UP000694571">
    <property type="component" value="Unplaced"/>
</dbReference>
<dbReference type="Proteomes" id="UP000694720">
    <property type="component" value="Unplaced"/>
</dbReference>
<dbReference type="Proteomes" id="UP000694722">
    <property type="component" value="Unplaced"/>
</dbReference>
<dbReference type="Proteomes" id="UP000694723">
    <property type="component" value="Unplaced"/>
</dbReference>
<dbReference type="Proteomes" id="UP000694724">
    <property type="component" value="Unplaced"/>
</dbReference>
<dbReference type="Proteomes" id="UP000694725">
    <property type="component" value="Unplaced"/>
</dbReference>
<dbReference type="Proteomes" id="UP000694726">
    <property type="component" value="Unplaced"/>
</dbReference>
<dbReference type="Proteomes" id="UP000694727">
    <property type="component" value="Unplaced"/>
</dbReference>
<dbReference type="Proteomes" id="UP000694728">
    <property type="component" value="Unplaced"/>
</dbReference>
<dbReference type="GO" id="GO:0005759">
    <property type="term" value="C:mitochondrial matrix"/>
    <property type="evidence" value="ECO:0000250"/>
    <property type="project" value="UniProtKB"/>
</dbReference>
<dbReference type="GO" id="GO:0005524">
    <property type="term" value="F:ATP binding"/>
    <property type="evidence" value="ECO:0007669"/>
    <property type="project" value="UniProtKB-KW"/>
</dbReference>
<dbReference type="GO" id="GO:0004140">
    <property type="term" value="F:dephospho-CoA kinase activity"/>
    <property type="evidence" value="ECO:0000314"/>
    <property type="project" value="UniProtKB"/>
</dbReference>
<dbReference type="GO" id="GO:0004595">
    <property type="term" value="F:pantetheine-phosphate adenylyltransferase activity"/>
    <property type="evidence" value="ECO:0000314"/>
    <property type="project" value="UniProtKB"/>
</dbReference>
<dbReference type="GO" id="GO:0015937">
    <property type="term" value="P:coenzyme A biosynthetic process"/>
    <property type="evidence" value="ECO:0007669"/>
    <property type="project" value="UniProtKB-UniPathway"/>
</dbReference>
<dbReference type="CDD" id="cd02022">
    <property type="entry name" value="DPCK"/>
    <property type="match status" value="1"/>
</dbReference>
<dbReference type="CDD" id="cd02164">
    <property type="entry name" value="PPAT_CoAS"/>
    <property type="match status" value="1"/>
</dbReference>
<dbReference type="FunFam" id="3.40.50.300:FF:000899">
    <property type="entry name" value="Bifunctional coenzyme A synthase"/>
    <property type="match status" value="1"/>
</dbReference>
<dbReference type="FunFam" id="3.40.50.620:FF:000089">
    <property type="entry name" value="Bifunctional coenzyme A synthase"/>
    <property type="match status" value="1"/>
</dbReference>
<dbReference type="Gene3D" id="3.40.50.620">
    <property type="entry name" value="HUPs"/>
    <property type="match status" value="1"/>
</dbReference>
<dbReference type="Gene3D" id="3.40.50.300">
    <property type="entry name" value="P-loop containing nucleotide triphosphate hydrolases"/>
    <property type="match status" value="1"/>
</dbReference>
<dbReference type="HAMAP" id="MF_00376">
    <property type="entry name" value="Dephospho_CoA_kinase"/>
    <property type="match status" value="1"/>
</dbReference>
<dbReference type="InterPro" id="IPR004821">
    <property type="entry name" value="Cyt_trans-like"/>
</dbReference>
<dbReference type="InterPro" id="IPR001977">
    <property type="entry name" value="Depp_CoAkinase"/>
</dbReference>
<dbReference type="InterPro" id="IPR027417">
    <property type="entry name" value="P-loop_NTPase"/>
</dbReference>
<dbReference type="InterPro" id="IPR014729">
    <property type="entry name" value="Rossmann-like_a/b/a_fold"/>
</dbReference>
<dbReference type="NCBIfam" id="TIGR00152">
    <property type="entry name" value="dephospho-CoA kinase"/>
    <property type="match status" value="1"/>
</dbReference>
<dbReference type="PANTHER" id="PTHR10695:SF46">
    <property type="entry name" value="BIFUNCTIONAL COENZYME A SYNTHASE-RELATED"/>
    <property type="match status" value="1"/>
</dbReference>
<dbReference type="PANTHER" id="PTHR10695">
    <property type="entry name" value="DEPHOSPHO-COA KINASE-RELATED"/>
    <property type="match status" value="1"/>
</dbReference>
<dbReference type="Pfam" id="PF01121">
    <property type="entry name" value="CoaE"/>
    <property type="match status" value="1"/>
</dbReference>
<dbReference type="Pfam" id="PF01467">
    <property type="entry name" value="CTP_transf_like"/>
    <property type="match status" value="1"/>
</dbReference>
<dbReference type="SUPFAM" id="SSF52374">
    <property type="entry name" value="Nucleotidylyl transferase"/>
    <property type="match status" value="1"/>
</dbReference>
<dbReference type="SUPFAM" id="SSF52540">
    <property type="entry name" value="P-loop containing nucleoside triphosphate hydrolases"/>
    <property type="match status" value="1"/>
</dbReference>
<dbReference type="PROSITE" id="PS51219">
    <property type="entry name" value="DPCK"/>
    <property type="match status" value="1"/>
</dbReference>
<name>COASY_PIG</name>
<protein>
    <recommendedName>
        <fullName>Bifunctional coenzyme A synthase</fullName>
        <shortName>CoA synthase</shortName>
    </recommendedName>
    <alternativeName>
        <fullName>NBP</fullName>
    </alternativeName>
    <alternativeName>
        <fullName>POV-2</fullName>
    </alternativeName>
    <domain>
        <recommendedName>
            <fullName>Phosphopantetheine adenylyltransferase</fullName>
            <ecNumber evidence="4">2.7.7.3</ecNumber>
        </recommendedName>
        <alternativeName>
            <fullName>Dephospho-CoA pyrophosphorylase</fullName>
        </alternativeName>
        <alternativeName>
            <fullName>Pantetheine-phosphate adenylyltransferase</fullName>
            <shortName>PPAT</shortName>
        </alternativeName>
    </domain>
    <domain>
        <recommendedName>
            <fullName>Dephospho-CoA kinase</fullName>
            <shortName>DPCK</shortName>
            <ecNumber evidence="4">2.7.1.24</ecNumber>
        </recommendedName>
        <alternativeName>
            <fullName>Dephosphocoenzyme A kinase</fullName>
            <shortName>DPCOAK</shortName>
        </alternativeName>
    </domain>
</protein>
<feature type="chain" id="PRO_0000173041" description="Bifunctional coenzyme A synthase">
    <location>
        <begin position="1"/>
        <end position="562"/>
    </location>
</feature>
<feature type="domain" description="DPCK">
    <location>
        <begin position="359"/>
        <end position="562"/>
    </location>
</feature>
<feature type="region of interest" description="Phosphopantetheine adenylyltransferase">
    <location>
        <begin position="179"/>
        <end position="357"/>
    </location>
</feature>
<feature type="binding site" evidence="1 2">
    <location>
        <begin position="364"/>
        <end position="371"/>
    </location>
    <ligand>
        <name>ATP</name>
        <dbReference type="ChEBI" id="CHEBI:30616"/>
    </ligand>
</feature>
<feature type="modified residue" description="Phosphoserine" evidence="1">
    <location>
        <position position="177"/>
    </location>
</feature>
<feature type="modified residue" description="Phosphoserine" evidence="1">
    <location>
        <position position="182"/>
    </location>
</feature>
<sequence length="562" mass="61749">MAVFRSGLLVLTTPLASLVPRLAPILTSAARLVNHTLYVHLQPGMNLGGPAQPQSSPVQATFEVIDFITHLYAGADLHRHLDVRILLTNIRTKSFLPPLPSSVQNLAHPPEVVLTDFQTLDGSQYNPVKQQLERYATSCYSCCPQLSSVLLYPDYGPGMLPVQPLDVPLPSTIRPASPVARSAKQPVRGHQRGAVGGTFDRLHNAHKVLLSVACILAQEQLVVGVADKDLLKSKLLPELLQPYTERVEHLSEFLVDIKPSLSFDLIPLLDPYGPAGSDPSLEFLVVSEETYRGGMAVNRFRLENGLEELTLYQIQLLKDLNPKENEEDKVSSSSFRQQMLGNLLRPPHKRPELPPGCYVIGLTGISGSGKSSVAQRLKGLGAYVIDSDQLGHRSYAPGGPAYQPVVEAFGTDILHKDGTINRKVLGSRVFGNKKQLKILTDIVWPVIAKLAREEVDQAVAEGKRVCVIDAAVLLEAGWQNMVHEVWTVVIPETEAVRRIVERDGLSEAAAQSRLQSQMSGQQLVDQSHVVLSTLWEPHVTQRQVEKAWALLQKRISEAPSDP</sequence>
<keyword id="KW-0067">ATP-binding</keyword>
<keyword id="KW-0173">Coenzyme A biosynthesis</keyword>
<keyword id="KW-0963">Cytoplasm</keyword>
<keyword id="KW-0903">Direct protein sequencing</keyword>
<keyword id="KW-0418">Kinase</keyword>
<keyword id="KW-0496">Mitochondrion</keyword>
<keyword id="KW-0511">Multifunctional enzyme</keyword>
<keyword id="KW-0547">Nucleotide-binding</keyword>
<keyword id="KW-0548">Nucleotidyltransferase</keyword>
<keyword id="KW-0597">Phosphoprotein</keyword>
<keyword id="KW-1185">Reference proteome</keyword>
<keyword id="KW-0808">Transferase</keyword>
<organism>
    <name type="scientific">Sus scrofa</name>
    <name type="common">Pig</name>
    <dbReference type="NCBI Taxonomy" id="9823"/>
    <lineage>
        <taxon>Eukaryota</taxon>
        <taxon>Metazoa</taxon>
        <taxon>Chordata</taxon>
        <taxon>Craniata</taxon>
        <taxon>Vertebrata</taxon>
        <taxon>Euteleostomi</taxon>
        <taxon>Mammalia</taxon>
        <taxon>Eutheria</taxon>
        <taxon>Laurasiatheria</taxon>
        <taxon>Artiodactyla</taxon>
        <taxon>Suina</taxon>
        <taxon>Suidae</taxon>
        <taxon>Sus</taxon>
    </lineage>
</organism>
<gene>
    <name evidence="1" type="primary">COASY</name>
</gene>
<evidence type="ECO:0000250" key="1">
    <source>
        <dbReference type="UniProtKB" id="Q13057"/>
    </source>
</evidence>
<evidence type="ECO:0000255" key="2"/>
<evidence type="ECO:0000269" key="3">
    <source>
    </source>
</evidence>
<evidence type="ECO:0000269" key="4">
    <source>
    </source>
</evidence>
<evidence type="ECO:0000305" key="5"/>
<evidence type="ECO:0000305" key="6">
    <source>
    </source>
</evidence>
<evidence type="ECO:0000312" key="7">
    <source>
        <dbReference type="EMBL" id="AAM19997.1"/>
    </source>
</evidence>
<accession>Q8MIR4</accession>
<reference evidence="5 7" key="1">
    <citation type="journal article" date="2002" name="Biochem. J.">
        <title>Identification and characterization of the gene encoding the human phosphopantetheine adenylyltransferase and dephospho-CoA kinase bifunctional enzyme (CoA synthase).</title>
        <authorList>
            <person name="Aghajanian S."/>
            <person name="Worrall D.M."/>
        </authorList>
    </citation>
    <scope>NUCLEOTIDE SEQUENCE [MRNA]</scope>
    <scope>PROTEIN SEQUENCE OF 46-64; 160-177; 182-210; 296-315; 340-355; 482-500 AND 519-536</scope>
    <scope>BIOPHYSICOCHEMICAL PROPERTIES</scope>
    <scope>SUBUNIT</scope>
    <source>
        <tissue evidence="7">Liver</tissue>
    </source>
</reference>
<reference evidence="5" key="2">
    <citation type="journal article" date="1983" name="Biochem. J.">
        <title>A bifunctional enzyme complex in coenzyme A biosynthesis: purification of pantetheine phosphate adenylyltransferase and dephospho-CoA kinase.</title>
        <authorList>
            <person name="Worrall D.M."/>
            <person name="Tubbs P.K."/>
        </authorList>
    </citation>
    <scope>FUNCTION</scope>
    <scope>CATALYTIC ACTIVITY</scope>
</reference>